<comment type="function">
    <text evidence="1">ATPase subunit of a proteasome-like degradation complex; this subunit has chaperone activity. The binding of ATP and its subsequent hydrolysis by HslU are essential for unfolding of protein substrates subsequently hydrolyzed by HslV. HslU recognizes the N-terminal part of its protein substrates and unfolds these before they are guided to HslV for hydrolysis.</text>
</comment>
<comment type="subunit">
    <text evidence="1">A double ring-shaped homohexamer of HslV is capped on each side by a ring-shaped HslU homohexamer. The assembly of the HslU/HslV complex is dependent on binding of ATP.</text>
</comment>
<comment type="subcellular location">
    <subcellularLocation>
        <location evidence="1">Cytoplasm</location>
    </subcellularLocation>
</comment>
<comment type="similarity">
    <text evidence="1">Belongs to the ClpX chaperone family. HslU subfamily.</text>
</comment>
<accession>Q02EW3</accession>
<evidence type="ECO:0000255" key="1">
    <source>
        <dbReference type="HAMAP-Rule" id="MF_00249"/>
    </source>
</evidence>
<reference key="1">
    <citation type="journal article" date="2006" name="Genome Biol.">
        <title>Genomic analysis reveals that Pseudomonas aeruginosa virulence is combinatorial.</title>
        <authorList>
            <person name="Lee D.G."/>
            <person name="Urbach J.M."/>
            <person name="Wu G."/>
            <person name="Liberati N.T."/>
            <person name="Feinbaum R.L."/>
            <person name="Miyata S."/>
            <person name="Diggins L.T."/>
            <person name="He J."/>
            <person name="Saucier M."/>
            <person name="Deziel E."/>
            <person name="Friedman L."/>
            <person name="Li L."/>
            <person name="Grills G."/>
            <person name="Montgomery K."/>
            <person name="Kucherlapati R."/>
            <person name="Rahme L.G."/>
            <person name="Ausubel F.M."/>
        </authorList>
    </citation>
    <scope>NUCLEOTIDE SEQUENCE [LARGE SCALE GENOMIC DNA]</scope>
    <source>
        <strain>UCBPP-PA14</strain>
    </source>
</reference>
<proteinExistence type="inferred from homology"/>
<gene>
    <name evidence="1" type="primary">hslU</name>
    <name type="ordered locus">PA14_66790</name>
</gene>
<name>HSLU_PSEAB</name>
<organism>
    <name type="scientific">Pseudomonas aeruginosa (strain UCBPP-PA14)</name>
    <dbReference type="NCBI Taxonomy" id="208963"/>
    <lineage>
        <taxon>Bacteria</taxon>
        <taxon>Pseudomonadati</taxon>
        <taxon>Pseudomonadota</taxon>
        <taxon>Gammaproteobacteria</taxon>
        <taxon>Pseudomonadales</taxon>
        <taxon>Pseudomonadaceae</taxon>
        <taxon>Pseudomonas</taxon>
    </lineage>
</organism>
<feature type="chain" id="PRO_1000012772" description="ATP-dependent protease ATPase subunit HslU">
    <location>
        <begin position="1"/>
        <end position="447"/>
    </location>
</feature>
<feature type="binding site" evidence="1">
    <location>
        <position position="17"/>
    </location>
    <ligand>
        <name>ATP</name>
        <dbReference type="ChEBI" id="CHEBI:30616"/>
    </ligand>
</feature>
<feature type="binding site" evidence="1">
    <location>
        <begin position="59"/>
        <end position="64"/>
    </location>
    <ligand>
        <name>ATP</name>
        <dbReference type="ChEBI" id="CHEBI:30616"/>
    </ligand>
</feature>
<feature type="binding site" evidence="1">
    <location>
        <position position="256"/>
    </location>
    <ligand>
        <name>ATP</name>
        <dbReference type="ChEBI" id="CHEBI:30616"/>
    </ligand>
</feature>
<feature type="binding site" evidence="1">
    <location>
        <position position="321"/>
    </location>
    <ligand>
        <name>ATP</name>
        <dbReference type="ChEBI" id="CHEBI:30616"/>
    </ligand>
</feature>
<feature type="binding site" evidence="1">
    <location>
        <position position="393"/>
    </location>
    <ligand>
        <name>ATP</name>
        <dbReference type="ChEBI" id="CHEBI:30616"/>
    </ligand>
</feature>
<keyword id="KW-0067">ATP-binding</keyword>
<keyword id="KW-0143">Chaperone</keyword>
<keyword id="KW-0963">Cytoplasm</keyword>
<keyword id="KW-0547">Nucleotide-binding</keyword>
<keyword id="KW-0346">Stress response</keyword>
<sequence length="447" mass="50082">MSMTPREIVHELNRHIIGQDDAKRAVAIALRNRWRRMQLPAELRAEVTPKNILMIGPTGVGKTEIARRLARLANAPFIKVEATKFTEVGYVGRDVESIIRDLADAAVKMLREQEIQKVKYRAEDAAEERILDALLPAARPAMGFGDEPAREDSNTRQLFRKRLREGQLDDKEIDIEVADNPAGVEIMAPPGMEEMTNQLQNLFSGMSKGKKKTRKLKVAEALKLIRDEEAVRLVNEEELKARALEAVEQHGIVFIDEIDKIAKRANAGGADVSREGVQRDLLPLIEGCTVNTKLGMVKTDHILFIASGAFHLSKPSDLVPELQGRLPIRVELKALSPNDFERILTEPHASLTEQYRELLKTEGLAIEFAEDGIKRLAEIAWQVNEKTENIGARRLHTLLERLLEEVSFSAADLASEHSDKPILIDAGYVNSHLGELAEDEDLSRYIL</sequence>
<protein>
    <recommendedName>
        <fullName evidence="1">ATP-dependent protease ATPase subunit HslU</fullName>
    </recommendedName>
    <alternativeName>
        <fullName evidence="1">Unfoldase HslU</fullName>
    </alternativeName>
</protein>
<dbReference type="EMBL" id="CP000438">
    <property type="protein sequence ID" value="ABJ14438.1"/>
    <property type="molecule type" value="Genomic_DNA"/>
</dbReference>
<dbReference type="RefSeq" id="WP_003095854.1">
    <property type="nucleotide sequence ID" value="NZ_CP034244.1"/>
</dbReference>
<dbReference type="SMR" id="Q02EW3"/>
<dbReference type="KEGG" id="pau:PA14_66790"/>
<dbReference type="PseudoCAP" id="PA14_66790"/>
<dbReference type="HOGENOM" id="CLU_033123_0_0_6"/>
<dbReference type="BioCyc" id="PAER208963:G1G74-5634-MONOMER"/>
<dbReference type="Proteomes" id="UP000000653">
    <property type="component" value="Chromosome"/>
</dbReference>
<dbReference type="GO" id="GO:0009376">
    <property type="term" value="C:HslUV protease complex"/>
    <property type="evidence" value="ECO:0007669"/>
    <property type="project" value="UniProtKB-UniRule"/>
</dbReference>
<dbReference type="GO" id="GO:0005524">
    <property type="term" value="F:ATP binding"/>
    <property type="evidence" value="ECO:0007669"/>
    <property type="project" value="UniProtKB-UniRule"/>
</dbReference>
<dbReference type="GO" id="GO:0016887">
    <property type="term" value="F:ATP hydrolysis activity"/>
    <property type="evidence" value="ECO:0007669"/>
    <property type="project" value="InterPro"/>
</dbReference>
<dbReference type="GO" id="GO:0008233">
    <property type="term" value="F:peptidase activity"/>
    <property type="evidence" value="ECO:0007669"/>
    <property type="project" value="InterPro"/>
</dbReference>
<dbReference type="GO" id="GO:0036402">
    <property type="term" value="F:proteasome-activating activity"/>
    <property type="evidence" value="ECO:0007669"/>
    <property type="project" value="UniProtKB-UniRule"/>
</dbReference>
<dbReference type="GO" id="GO:0043335">
    <property type="term" value="P:protein unfolding"/>
    <property type="evidence" value="ECO:0007669"/>
    <property type="project" value="UniProtKB-UniRule"/>
</dbReference>
<dbReference type="GO" id="GO:0051603">
    <property type="term" value="P:proteolysis involved in protein catabolic process"/>
    <property type="evidence" value="ECO:0007669"/>
    <property type="project" value="TreeGrafter"/>
</dbReference>
<dbReference type="CDD" id="cd19498">
    <property type="entry name" value="RecA-like_HslU"/>
    <property type="match status" value="1"/>
</dbReference>
<dbReference type="FunFam" id="1.10.8.10:FF:000028">
    <property type="entry name" value="ATP-dependent protease ATPase subunit HslU"/>
    <property type="match status" value="1"/>
</dbReference>
<dbReference type="FunFam" id="3.40.50.300:FF:000213">
    <property type="entry name" value="ATP-dependent protease ATPase subunit HslU"/>
    <property type="match status" value="1"/>
</dbReference>
<dbReference type="FunFam" id="3.40.50.300:FF:000220">
    <property type="entry name" value="ATP-dependent protease ATPase subunit HslU"/>
    <property type="match status" value="1"/>
</dbReference>
<dbReference type="Gene3D" id="1.10.8.60">
    <property type="match status" value="1"/>
</dbReference>
<dbReference type="Gene3D" id="3.40.50.300">
    <property type="entry name" value="P-loop containing nucleotide triphosphate hydrolases"/>
    <property type="match status" value="2"/>
</dbReference>
<dbReference type="HAMAP" id="MF_00249">
    <property type="entry name" value="HslU"/>
    <property type="match status" value="1"/>
</dbReference>
<dbReference type="InterPro" id="IPR003593">
    <property type="entry name" value="AAA+_ATPase"/>
</dbReference>
<dbReference type="InterPro" id="IPR050052">
    <property type="entry name" value="ATP-dep_Clp_protease_ClpX"/>
</dbReference>
<dbReference type="InterPro" id="IPR003959">
    <property type="entry name" value="ATPase_AAA_core"/>
</dbReference>
<dbReference type="InterPro" id="IPR019489">
    <property type="entry name" value="Clp_ATPase_C"/>
</dbReference>
<dbReference type="InterPro" id="IPR004491">
    <property type="entry name" value="HslU"/>
</dbReference>
<dbReference type="InterPro" id="IPR027417">
    <property type="entry name" value="P-loop_NTPase"/>
</dbReference>
<dbReference type="NCBIfam" id="TIGR00390">
    <property type="entry name" value="hslU"/>
    <property type="match status" value="1"/>
</dbReference>
<dbReference type="NCBIfam" id="NF003544">
    <property type="entry name" value="PRK05201.1"/>
    <property type="match status" value="1"/>
</dbReference>
<dbReference type="PANTHER" id="PTHR48102">
    <property type="entry name" value="ATP-DEPENDENT CLP PROTEASE ATP-BINDING SUBUNIT CLPX-LIKE, MITOCHONDRIAL-RELATED"/>
    <property type="match status" value="1"/>
</dbReference>
<dbReference type="PANTHER" id="PTHR48102:SF3">
    <property type="entry name" value="ATP-DEPENDENT PROTEASE ATPASE SUBUNIT HSLU"/>
    <property type="match status" value="1"/>
</dbReference>
<dbReference type="Pfam" id="PF00004">
    <property type="entry name" value="AAA"/>
    <property type="match status" value="1"/>
</dbReference>
<dbReference type="Pfam" id="PF07724">
    <property type="entry name" value="AAA_2"/>
    <property type="match status" value="1"/>
</dbReference>
<dbReference type="SMART" id="SM00382">
    <property type="entry name" value="AAA"/>
    <property type="match status" value="1"/>
</dbReference>
<dbReference type="SMART" id="SM01086">
    <property type="entry name" value="ClpB_D2-small"/>
    <property type="match status" value="1"/>
</dbReference>
<dbReference type="SUPFAM" id="SSF52540">
    <property type="entry name" value="P-loop containing nucleoside triphosphate hydrolases"/>
    <property type="match status" value="1"/>
</dbReference>